<comment type="function">
    <text evidence="1">Required for the first step of histidine biosynthesis. May allow the feedback regulation of ATP phosphoribosyltransferase activity by histidine.</text>
</comment>
<comment type="pathway">
    <text evidence="1">Amino-acid biosynthesis; L-histidine biosynthesis; L-histidine from 5-phospho-alpha-D-ribose 1-diphosphate: step 1/9.</text>
</comment>
<comment type="subunit">
    <text evidence="1">Heteromultimer composed of HisG and HisZ subunits.</text>
</comment>
<comment type="subcellular location">
    <subcellularLocation>
        <location evidence="1">Cytoplasm</location>
    </subcellularLocation>
</comment>
<comment type="miscellaneous">
    <text>This function is generally fulfilled by the C-terminal part of HisG, which is missing in some bacteria such as this one.</text>
</comment>
<comment type="similarity">
    <text evidence="1">Belongs to the class-II aminoacyl-tRNA synthetase family. HisZ subfamily.</text>
</comment>
<organism>
    <name type="scientific">Pseudomonas paraeruginosa (strain DSM 24068 / PA7)</name>
    <name type="common">Pseudomonas aeruginosa (strain PA7)</name>
    <dbReference type="NCBI Taxonomy" id="381754"/>
    <lineage>
        <taxon>Bacteria</taxon>
        <taxon>Pseudomonadati</taxon>
        <taxon>Pseudomonadota</taxon>
        <taxon>Gammaproteobacteria</taxon>
        <taxon>Pseudomonadales</taxon>
        <taxon>Pseudomonadaceae</taxon>
        <taxon>Pseudomonas</taxon>
        <taxon>Pseudomonas paraeruginosa</taxon>
    </lineage>
</organism>
<protein>
    <recommendedName>
        <fullName evidence="1">ATP phosphoribosyltransferase regulatory subunit</fullName>
    </recommendedName>
</protein>
<feature type="chain" id="PRO_1000016275" description="ATP phosphoribosyltransferase regulatory subunit">
    <location>
        <begin position="1"/>
        <end position="394"/>
    </location>
</feature>
<reference key="1">
    <citation type="submission" date="2007-06" db="EMBL/GenBank/DDBJ databases">
        <authorList>
            <person name="Dodson R.J."/>
            <person name="Harkins D."/>
            <person name="Paulsen I.T."/>
        </authorList>
    </citation>
    <scope>NUCLEOTIDE SEQUENCE [LARGE SCALE GENOMIC DNA]</scope>
    <source>
        <strain>DSM 24068 / PA7</strain>
    </source>
</reference>
<proteinExistence type="inferred from homology"/>
<keyword id="KW-0028">Amino-acid biosynthesis</keyword>
<keyword id="KW-0963">Cytoplasm</keyword>
<keyword id="KW-0368">Histidine biosynthesis</keyword>
<sequence>MATVDRWLLPDGIEEVLPPEAARIEAARRQVLDLFHRWGYEFVVTPHIEYLESLLTGAGQDLDLRTFKVTDPASGRLMGFRADITPQVARMDAHSLRREGPSRLCYAGSVLHAQPRALSTSRSPIQLGAELYGDASPASDVEVISLMLDMLEMAEVPDVHMDLGHVGIYRGLARAAGLSGEVEQQLFDALQRKAVDEVEALTASLPGELRDMLRALAELCGGRDALEQGRVRLAAAPTEVQVALNELIEIADSLAARFPGLPLYFDLGELRGYHYHTGVVFAAFVPGVGQSIAQGGRYDDIGADFGRARPATGFSTDLKNLVTLGQARLDQAVSGIWAPAEGAGLWQAVQRLRRDGQRVVQALPGQDAASAREAGCDRQLALRDGNWQVAPLAS</sequence>
<accession>A6VD52</accession>
<name>HISZ_PSEP7</name>
<evidence type="ECO:0000255" key="1">
    <source>
        <dbReference type="HAMAP-Rule" id="MF_00125"/>
    </source>
</evidence>
<gene>
    <name evidence="1" type="primary">hisZ</name>
    <name type="ordered locus">PSPA7_5668</name>
</gene>
<dbReference type="EMBL" id="CP000744">
    <property type="protein sequence ID" value="ABR84936.1"/>
    <property type="molecule type" value="Genomic_DNA"/>
</dbReference>
<dbReference type="RefSeq" id="WP_012077631.1">
    <property type="nucleotide sequence ID" value="NC_009656.1"/>
</dbReference>
<dbReference type="SMR" id="A6VD52"/>
<dbReference type="KEGG" id="pap:PSPA7_5668"/>
<dbReference type="HOGENOM" id="CLU_025113_0_1_6"/>
<dbReference type="UniPathway" id="UPA00031">
    <property type="reaction ID" value="UER00006"/>
</dbReference>
<dbReference type="Proteomes" id="UP000001582">
    <property type="component" value="Chromosome"/>
</dbReference>
<dbReference type="GO" id="GO:0005737">
    <property type="term" value="C:cytoplasm"/>
    <property type="evidence" value="ECO:0007669"/>
    <property type="project" value="UniProtKB-SubCell"/>
</dbReference>
<dbReference type="GO" id="GO:0000105">
    <property type="term" value="P:L-histidine biosynthetic process"/>
    <property type="evidence" value="ECO:0007669"/>
    <property type="project" value="UniProtKB-UniRule"/>
</dbReference>
<dbReference type="CDD" id="cd00773">
    <property type="entry name" value="HisRS-like_core"/>
    <property type="match status" value="1"/>
</dbReference>
<dbReference type="Gene3D" id="3.30.930.10">
    <property type="entry name" value="Bira Bifunctional Protein, Domain 2"/>
    <property type="match status" value="1"/>
</dbReference>
<dbReference type="HAMAP" id="MF_00125">
    <property type="entry name" value="HisZ"/>
    <property type="match status" value="1"/>
</dbReference>
<dbReference type="InterPro" id="IPR045864">
    <property type="entry name" value="aa-tRNA-synth_II/BPL/LPL"/>
</dbReference>
<dbReference type="InterPro" id="IPR041715">
    <property type="entry name" value="HisRS-like_core"/>
</dbReference>
<dbReference type="InterPro" id="IPR004516">
    <property type="entry name" value="HisRS/HisZ"/>
</dbReference>
<dbReference type="InterPro" id="IPR004517">
    <property type="entry name" value="HisZ"/>
</dbReference>
<dbReference type="NCBIfam" id="TIGR00443">
    <property type="entry name" value="hisZ_biosyn_reg"/>
    <property type="match status" value="1"/>
</dbReference>
<dbReference type="NCBIfam" id="NF008935">
    <property type="entry name" value="PRK12292.1-1"/>
    <property type="match status" value="1"/>
</dbReference>
<dbReference type="NCBIfam" id="NF008937">
    <property type="entry name" value="PRK12292.1-4"/>
    <property type="match status" value="1"/>
</dbReference>
<dbReference type="NCBIfam" id="NF009086">
    <property type="entry name" value="PRK12421.1"/>
    <property type="match status" value="1"/>
</dbReference>
<dbReference type="PANTHER" id="PTHR11476:SF7">
    <property type="entry name" value="HISTIDINE--TRNA LIGASE"/>
    <property type="match status" value="1"/>
</dbReference>
<dbReference type="PANTHER" id="PTHR11476">
    <property type="entry name" value="HISTIDYL-TRNA SYNTHETASE"/>
    <property type="match status" value="1"/>
</dbReference>
<dbReference type="Pfam" id="PF13393">
    <property type="entry name" value="tRNA-synt_His"/>
    <property type="match status" value="1"/>
</dbReference>
<dbReference type="PIRSF" id="PIRSF001549">
    <property type="entry name" value="His-tRNA_synth"/>
    <property type="match status" value="1"/>
</dbReference>
<dbReference type="SUPFAM" id="SSF55681">
    <property type="entry name" value="Class II aaRS and biotin synthetases"/>
    <property type="match status" value="1"/>
</dbReference>